<protein>
    <recommendedName>
        <fullName evidence="1">Ribosomal RNA small subunit methyltransferase H</fullName>
        <ecNumber evidence="1">2.1.1.199</ecNumber>
    </recommendedName>
    <alternativeName>
        <fullName evidence="1">16S rRNA m(4)C1402 methyltransferase</fullName>
    </alternativeName>
    <alternativeName>
        <fullName evidence="1">rRNA (cytosine-N(4)-)-methyltransferase RsmH</fullName>
    </alternativeName>
</protein>
<proteinExistence type="inferred from homology"/>
<keyword id="KW-0963">Cytoplasm</keyword>
<keyword id="KW-0489">Methyltransferase</keyword>
<keyword id="KW-0698">rRNA processing</keyword>
<keyword id="KW-0949">S-adenosyl-L-methionine</keyword>
<keyword id="KW-0808">Transferase</keyword>
<evidence type="ECO:0000255" key="1">
    <source>
        <dbReference type="HAMAP-Rule" id="MF_01007"/>
    </source>
</evidence>
<organism>
    <name type="scientific">Salmonella paratyphi A (strain AKU_12601)</name>
    <dbReference type="NCBI Taxonomy" id="554290"/>
    <lineage>
        <taxon>Bacteria</taxon>
        <taxon>Pseudomonadati</taxon>
        <taxon>Pseudomonadota</taxon>
        <taxon>Gammaproteobacteria</taxon>
        <taxon>Enterobacterales</taxon>
        <taxon>Enterobacteriaceae</taxon>
        <taxon>Salmonella</taxon>
    </lineage>
</organism>
<accession>B5BLG4</accession>
<gene>
    <name evidence="1" type="primary">rsmH</name>
    <name type="synonym">mraW</name>
    <name type="ordered locus">SSPA0118</name>
</gene>
<reference key="1">
    <citation type="journal article" date="2009" name="BMC Genomics">
        <title>Pseudogene accumulation in the evolutionary histories of Salmonella enterica serovars Paratyphi A and Typhi.</title>
        <authorList>
            <person name="Holt K.E."/>
            <person name="Thomson N.R."/>
            <person name="Wain J."/>
            <person name="Langridge G.C."/>
            <person name="Hasan R."/>
            <person name="Bhutta Z.A."/>
            <person name="Quail M.A."/>
            <person name="Norbertczak H."/>
            <person name="Walker D."/>
            <person name="Simmonds M."/>
            <person name="White B."/>
            <person name="Bason N."/>
            <person name="Mungall K."/>
            <person name="Dougan G."/>
            <person name="Parkhill J."/>
        </authorList>
    </citation>
    <scope>NUCLEOTIDE SEQUENCE [LARGE SCALE GENOMIC DNA]</scope>
    <source>
        <strain>AKU_12601</strain>
    </source>
</reference>
<comment type="function">
    <text evidence="1">Specifically methylates the N4 position of cytidine in position 1402 (C1402) of 16S rRNA.</text>
</comment>
<comment type="catalytic activity">
    <reaction evidence="1">
        <text>cytidine(1402) in 16S rRNA + S-adenosyl-L-methionine = N(4)-methylcytidine(1402) in 16S rRNA + S-adenosyl-L-homocysteine + H(+)</text>
        <dbReference type="Rhea" id="RHEA:42928"/>
        <dbReference type="Rhea" id="RHEA-COMP:10286"/>
        <dbReference type="Rhea" id="RHEA-COMP:10287"/>
        <dbReference type="ChEBI" id="CHEBI:15378"/>
        <dbReference type="ChEBI" id="CHEBI:57856"/>
        <dbReference type="ChEBI" id="CHEBI:59789"/>
        <dbReference type="ChEBI" id="CHEBI:74506"/>
        <dbReference type="ChEBI" id="CHEBI:82748"/>
        <dbReference type="EC" id="2.1.1.199"/>
    </reaction>
</comment>
<comment type="subcellular location">
    <subcellularLocation>
        <location evidence="1">Cytoplasm</location>
    </subcellularLocation>
</comment>
<comment type="similarity">
    <text evidence="1">Belongs to the methyltransferase superfamily. RsmH family.</text>
</comment>
<name>RSMH_SALPK</name>
<sequence>MMENFKHTTVLLDEAVNGLNIRPDGIYIDGTFGRGGHSRLILSQLGEEGRLLAIDRDPQAIAVAQAISDPRFSIIHGPFSALADYVAERELTGKIDGILLDLGVSSPQLDDAERGFSFMRDGPLDMRMDPTRGQSAAEWLQTAEEADIAWVLKTFGEERFAKRIARAIVERNREQPMTRTKELAEVVAAATPVKDKFKHPATRTFQAVRIWVNSELEEIEQALKSSLSVLAPGGRLSIISFHSLEDRIVKRFMREQSRGPQVPAGLPMTEAQLKKLGGRELRALGKLMPGEKEVAENPRARSSVLRIAERTNA</sequence>
<dbReference type="EC" id="2.1.1.199" evidence="1"/>
<dbReference type="EMBL" id="FM200053">
    <property type="protein sequence ID" value="CAR58229.1"/>
    <property type="molecule type" value="Genomic_DNA"/>
</dbReference>
<dbReference type="RefSeq" id="WP_000970435.1">
    <property type="nucleotide sequence ID" value="NC_011147.1"/>
</dbReference>
<dbReference type="SMR" id="B5BLG4"/>
<dbReference type="KEGG" id="sek:SSPA0118"/>
<dbReference type="HOGENOM" id="CLU_038422_2_0_6"/>
<dbReference type="Proteomes" id="UP000001869">
    <property type="component" value="Chromosome"/>
</dbReference>
<dbReference type="GO" id="GO:0005737">
    <property type="term" value="C:cytoplasm"/>
    <property type="evidence" value="ECO:0007669"/>
    <property type="project" value="UniProtKB-SubCell"/>
</dbReference>
<dbReference type="GO" id="GO:0071424">
    <property type="term" value="F:rRNA (cytosine-N4-)-methyltransferase activity"/>
    <property type="evidence" value="ECO:0007669"/>
    <property type="project" value="UniProtKB-UniRule"/>
</dbReference>
<dbReference type="GO" id="GO:0070475">
    <property type="term" value="P:rRNA base methylation"/>
    <property type="evidence" value="ECO:0007669"/>
    <property type="project" value="UniProtKB-UniRule"/>
</dbReference>
<dbReference type="FunFam" id="1.10.150.170:FF:000001">
    <property type="entry name" value="Ribosomal RNA small subunit methyltransferase H"/>
    <property type="match status" value="1"/>
</dbReference>
<dbReference type="Gene3D" id="1.10.150.170">
    <property type="entry name" value="Putative methyltransferase TM0872, insert domain"/>
    <property type="match status" value="1"/>
</dbReference>
<dbReference type="Gene3D" id="3.40.50.150">
    <property type="entry name" value="Vaccinia Virus protein VP39"/>
    <property type="match status" value="1"/>
</dbReference>
<dbReference type="HAMAP" id="MF_01007">
    <property type="entry name" value="16SrRNA_methyltr_H"/>
    <property type="match status" value="1"/>
</dbReference>
<dbReference type="InterPro" id="IPR002903">
    <property type="entry name" value="RsmH"/>
</dbReference>
<dbReference type="InterPro" id="IPR023397">
    <property type="entry name" value="SAM-dep_MeTrfase_MraW_recog"/>
</dbReference>
<dbReference type="InterPro" id="IPR029063">
    <property type="entry name" value="SAM-dependent_MTases_sf"/>
</dbReference>
<dbReference type="NCBIfam" id="TIGR00006">
    <property type="entry name" value="16S rRNA (cytosine(1402)-N(4))-methyltransferase RsmH"/>
    <property type="match status" value="1"/>
</dbReference>
<dbReference type="PANTHER" id="PTHR11265:SF0">
    <property type="entry name" value="12S RRNA N4-METHYLCYTIDINE METHYLTRANSFERASE"/>
    <property type="match status" value="1"/>
</dbReference>
<dbReference type="PANTHER" id="PTHR11265">
    <property type="entry name" value="S-ADENOSYL-METHYLTRANSFERASE MRAW"/>
    <property type="match status" value="1"/>
</dbReference>
<dbReference type="Pfam" id="PF01795">
    <property type="entry name" value="Methyltransf_5"/>
    <property type="match status" value="1"/>
</dbReference>
<dbReference type="PIRSF" id="PIRSF004486">
    <property type="entry name" value="MraW"/>
    <property type="match status" value="1"/>
</dbReference>
<dbReference type="SUPFAM" id="SSF81799">
    <property type="entry name" value="Putative methyltransferase TM0872, insert domain"/>
    <property type="match status" value="1"/>
</dbReference>
<dbReference type="SUPFAM" id="SSF53335">
    <property type="entry name" value="S-adenosyl-L-methionine-dependent methyltransferases"/>
    <property type="match status" value="1"/>
</dbReference>
<feature type="chain" id="PRO_0000387104" description="Ribosomal RNA small subunit methyltransferase H">
    <location>
        <begin position="1"/>
        <end position="313"/>
    </location>
</feature>
<feature type="binding site" evidence="1">
    <location>
        <begin position="35"/>
        <end position="37"/>
    </location>
    <ligand>
        <name>S-adenosyl-L-methionine</name>
        <dbReference type="ChEBI" id="CHEBI:59789"/>
    </ligand>
</feature>
<feature type="binding site" evidence="1">
    <location>
        <position position="55"/>
    </location>
    <ligand>
        <name>S-adenosyl-L-methionine</name>
        <dbReference type="ChEBI" id="CHEBI:59789"/>
    </ligand>
</feature>
<feature type="binding site" evidence="1">
    <location>
        <position position="79"/>
    </location>
    <ligand>
        <name>S-adenosyl-L-methionine</name>
        <dbReference type="ChEBI" id="CHEBI:59789"/>
    </ligand>
</feature>
<feature type="binding site" evidence="1">
    <location>
        <position position="101"/>
    </location>
    <ligand>
        <name>S-adenosyl-L-methionine</name>
        <dbReference type="ChEBI" id="CHEBI:59789"/>
    </ligand>
</feature>
<feature type="binding site" evidence="1">
    <location>
        <position position="108"/>
    </location>
    <ligand>
        <name>S-adenosyl-L-methionine</name>
        <dbReference type="ChEBI" id="CHEBI:59789"/>
    </ligand>
</feature>